<evidence type="ECO:0000250" key="1"/>
<evidence type="ECO:0000305" key="2"/>
<gene>
    <name type="primary">nifD</name>
</gene>
<dbReference type="EC" id="1.18.6.1"/>
<dbReference type="EMBL" id="D00666">
    <property type="protein sequence ID" value="BAA00569.1"/>
    <property type="molecule type" value="Genomic_DNA"/>
</dbReference>
<dbReference type="PIR" id="JQ2156">
    <property type="entry name" value="JQ2156"/>
</dbReference>
<dbReference type="SMR" id="Q00239"/>
<dbReference type="GO" id="GO:0016612">
    <property type="term" value="C:molybdenum-iron nitrogenase complex"/>
    <property type="evidence" value="ECO:0007669"/>
    <property type="project" value="InterPro"/>
</dbReference>
<dbReference type="GO" id="GO:0005524">
    <property type="term" value="F:ATP binding"/>
    <property type="evidence" value="ECO:0007669"/>
    <property type="project" value="UniProtKB-KW"/>
</dbReference>
<dbReference type="GO" id="GO:0051536">
    <property type="term" value="F:iron-sulfur cluster binding"/>
    <property type="evidence" value="ECO:0007669"/>
    <property type="project" value="UniProtKB-KW"/>
</dbReference>
<dbReference type="GO" id="GO:0046872">
    <property type="term" value="F:metal ion binding"/>
    <property type="evidence" value="ECO:0007669"/>
    <property type="project" value="UniProtKB-KW"/>
</dbReference>
<dbReference type="GO" id="GO:0016163">
    <property type="term" value="F:nitrogenase activity"/>
    <property type="evidence" value="ECO:0007669"/>
    <property type="project" value="UniProtKB-EC"/>
</dbReference>
<dbReference type="GO" id="GO:0009399">
    <property type="term" value="P:nitrogen fixation"/>
    <property type="evidence" value="ECO:0007669"/>
    <property type="project" value="UniProtKB-KW"/>
</dbReference>
<dbReference type="CDD" id="cd01976">
    <property type="entry name" value="Nitrogenase_MoFe_alpha"/>
    <property type="match status" value="1"/>
</dbReference>
<dbReference type="Gene3D" id="3.40.50.1980">
    <property type="entry name" value="Nitrogenase molybdenum iron protein domain"/>
    <property type="match status" value="3"/>
</dbReference>
<dbReference type="InterPro" id="IPR000510">
    <property type="entry name" value="Nase/OxRdtase_comp1"/>
</dbReference>
<dbReference type="InterPro" id="IPR010143">
    <property type="entry name" value="Nase_comp1_asu"/>
</dbReference>
<dbReference type="InterPro" id="IPR000318">
    <property type="entry name" value="Nase_comp1_CS"/>
</dbReference>
<dbReference type="InterPro" id="IPR005972">
    <property type="entry name" value="Nase_Mo-Fe_asu"/>
</dbReference>
<dbReference type="NCBIfam" id="TIGR01862">
    <property type="entry name" value="N2-ase-Ialpha"/>
    <property type="match status" value="1"/>
</dbReference>
<dbReference type="NCBIfam" id="TIGR01282">
    <property type="entry name" value="nifD"/>
    <property type="match status" value="1"/>
</dbReference>
<dbReference type="PANTHER" id="PTHR43457">
    <property type="entry name" value="NITROGENASE MOLYBDENUM-IRON PROTEIN ALPHA CHAIN"/>
    <property type="match status" value="1"/>
</dbReference>
<dbReference type="PANTHER" id="PTHR43457:SF1">
    <property type="entry name" value="NITROGENASE MOLYBDENUM-IRON PROTEIN ALPHA CHAIN"/>
    <property type="match status" value="1"/>
</dbReference>
<dbReference type="Pfam" id="PF00148">
    <property type="entry name" value="Oxidored_nitro"/>
    <property type="match status" value="1"/>
</dbReference>
<dbReference type="SUPFAM" id="SSF53807">
    <property type="entry name" value="Helical backbone' metal receptor"/>
    <property type="match status" value="1"/>
</dbReference>
<dbReference type="PROSITE" id="PS00699">
    <property type="entry name" value="NITROGENASE_1_1"/>
    <property type="match status" value="1"/>
</dbReference>
<dbReference type="PROSITE" id="PS00090">
    <property type="entry name" value="NITROGENASE_1_2"/>
    <property type="match status" value="1"/>
</dbReference>
<proteinExistence type="inferred from homology"/>
<organism>
    <name type="scientific">Leptolyngbya boryana</name>
    <name type="common">Plectonema boryanum</name>
    <dbReference type="NCBI Taxonomy" id="1184"/>
    <lineage>
        <taxon>Bacteria</taxon>
        <taxon>Bacillati</taxon>
        <taxon>Cyanobacteriota</taxon>
        <taxon>Cyanophyceae</taxon>
        <taxon>Leptolyngbyales</taxon>
        <taxon>Leptolyngbyaceae</taxon>
        <taxon>Leptolyngbya group</taxon>
        <taxon>Leptolyngbya</taxon>
    </lineage>
</organism>
<accession>Q00239</accession>
<protein>
    <recommendedName>
        <fullName>Nitrogenase molybdenum-iron protein alpha chain</fullName>
        <ecNumber>1.18.6.1</ecNumber>
    </recommendedName>
    <alternativeName>
        <fullName>Dinitrogenase</fullName>
    </alternativeName>
    <alternativeName>
        <fullName>Nitrogenase component I</fullName>
    </alternativeName>
</protein>
<keyword id="KW-0067">ATP-binding</keyword>
<keyword id="KW-0408">Iron</keyword>
<keyword id="KW-0411">Iron-sulfur</keyword>
<keyword id="KW-0479">Metal-binding</keyword>
<keyword id="KW-0500">Molybdenum</keyword>
<keyword id="KW-0535">Nitrogen fixation</keyword>
<keyword id="KW-0547">Nucleotide-binding</keyword>
<keyword id="KW-0560">Oxidoreductase</keyword>
<comment type="function">
    <text>This molybdenum-iron protein is part of the nitrogenase complex that catalyzes the key enzymatic reactions in nitrogen fixation.</text>
</comment>
<comment type="catalytic activity">
    <reaction>
        <text>N2 + 8 reduced [2Fe-2S]-[ferredoxin] + 16 ATP + 16 H2O = H2 + 8 oxidized [2Fe-2S]-[ferredoxin] + 2 NH4(+) + 16 ADP + 16 phosphate + 6 H(+)</text>
        <dbReference type="Rhea" id="RHEA:21448"/>
        <dbReference type="Rhea" id="RHEA-COMP:10000"/>
        <dbReference type="Rhea" id="RHEA-COMP:10001"/>
        <dbReference type="ChEBI" id="CHEBI:15377"/>
        <dbReference type="ChEBI" id="CHEBI:15378"/>
        <dbReference type="ChEBI" id="CHEBI:17997"/>
        <dbReference type="ChEBI" id="CHEBI:18276"/>
        <dbReference type="ChEBI" id="CHEBI:28938"/>
        <dbReference type="ChEBI" id="CHEBI:30616"/>
        <dbReference type="ChEBI" id="CHEBI:33737"/>
        <dbReference type="ChEBI" id="CHEBI:33738"/>
        <dbReference type="ChEBI" id="CHEBI:43474"/>
        <dbReference type="ChEBI" id="CHEBI:456216"/>
        <dbReference type="EC" id="1.18.6.1"/>
    </reaction>
</comment>
<comment type="cofactor">
    <cofactor evidence="1">
        <name>[8Fe-7S] cluster</name>
        <dbReference type="ChEBI" id="CHEBI:21143"/>
    </cofactor>
    <text evidence="1">Binds 1 [8Fe-7S] cluster per heterodimer.</text>
</comment>
<comment type="cofactor">
    <cofactor evidence="1">
        <name>[7Fe-Mo-9S-C-homocitryl] cluster</name>
        <dbReference type="ChEBI" id="CHEBI:30409"/>
    </cofactor>
    <text evidence="1">Binds 1 [7Fe-Mo-9S-C-homocitryl] cluster per subunit.</text>
</comment>
<comment type="subunit">
    <text>Tetramer of two alpha and two beta chains. Forms complex with the iron protein (nitrogenase component 2).</text>
</comment>
<comment type="similarity">
    <text evidence="2">Belongs to the NifD/NifK/NifE/NifN family.</text>
</comment>
<feature type="chain" id="PRO_0000153077" description="Nitrogenase molybdenum-iron protein alpha chain">
    <location>
        <begin position="1"/>
        <end position="494"/>
    </location>
</feature>
<feature type="binding site" evidence="1">
    <location>
        <position position="70"/>
    </location>
    <ligand>
        <name>[8Fe-7S] cluster</name>
        <dbReference type="ChEBI" id="CHEBI:21143"/>
        <note>ligand shared with beta chain</note>
    </ligand>
</feature>
<feature type="binding site" evidence="1">
    <location>
        <position position="96"/>
    </location>
    <ligand>
        <name>[8Fe-7S] cluster</name>
        <dbReference type="ChEBI" id="CHEBI:21143"/>
        <note>ligand shared with beta chain</note>
    </ligand>
</feature>
<feature type="binding site" evidence="1">
    <location>
        <position position="162"/>
    </location>
    <ligand>
        <name>[8Fe-7S] cluster</name>
        <dbReference type="ChEBI" id="CHEBI:21143"/>
        <note>ligand shared with beta chain</note>
    </ligand>
</feature>
<feature type="binding site" evidence="1">
    <location>
        <position position="288"/>
    </location>
    <ligand>
        <name>[7Fe-Mo-9S-C-homocitryl] cluster</name>
        <dbReference type="ChEBI" id="CHEBI:30409"/>
    </ligand>
</feature>
<feature type="binding site" evidence="1">
    <location>
        <position position="455"/>
    </location>
    <ligand>
        <name>[7Fe-Mo-9S-C-homocitryl] cluster</name>
        <dbReference type="ChEBI" id="CHEBI:30409"/>
    </ligand>
</feature>
<sequence>MTPPESVTLEENAATAVDPKELIKDVLEAYPEKGRKKREKHLNVYQEGKPDCGVKSNIKSLPGSMTTRGCAYAGSKGVVWGPIKDMIHISHGPVGCGYYSWSGRRNYYIGTTGIDTFGTMQFTSDFQERDIVFGGDKKLAKLITELEELFPLNRGISIQSECPIGLIGDDIEAVAKKSAKEINKAVVPVRCEGFRGVSQSLGHHIANDAVRDWIFPRTDKAKKDGTIDVDPTQYDVAIIGDYNIGGDAWSSRILLEEIGLRVVAQWSGDGTINELINTPTVKLNLVHCYRSMNYISRHMEETYGIPWLEYNFFGPTQIAKSLREIAAKFDETIQAKAEEVIAKYQAQTDEVIAKFLPRLQGKTVALMVGGLRPRHVVPAFYDLGMRLIGTGYEFGHNDDYKRTTHYIEDGTLIYDDVSAFEFEEFIKEMKPDLVASGIKEKYVFQKMALPFRQMHSWDYSGPYHGYDGFAIFARDMDMALNSPTWSLIGAPWSK</sequence>
<name>NIFD_LEPBY</name>
<reference key="1">
    <citation type="journal article" date="1991" name="Plant Cell Physiol.">
        <title>Cloning, nucleotide sequences and differential expression of the nifH and nifH-like (frxC) genes from the filamentous nitrogen-fixing cyanobacterium Plectonema boryanum.</title>
        <authorList>
            <person name="Fujita Y."/>
            <person name="Takahashi Y."/>
            <person name="Shonai F."/>
            <person name="Ogura Y."/>
            <person name="Matsubara H."/>
        </authorList>
    </citation>
    <scope>NUCLEOTIDE SEQUENCE [GENOMIC DNA]</scope>
    <source>
        <strain>ATCC 27894 / CCAP 1463/1 / IAM M-101 / PCC 6306 / UTEX 581</strain>
    </source>
</reference>